<name>UXUA_SACD2</name>
<dbReference type="EC" id="4.2.1.8" evidence="1"/>
<dbReference type="EMBL" id="CP000282">
    <property type="protein sequence ID" value="ABD80535.1"/>
    <property type="molecule type" value="Genomic_DNA"/>
</dbReference>
<dbReference type="RefSeq" id="WP_011467755.1">
    <property type="nucleotide sequence ID" value="NC_007912.1"/>
</dbReference>
<dbReference type="SMR" id="Q21L94"/>
<dbReference type="STRING" id="203122.Sde_1273"/>
<dbReference type="GeneID" id="98612950"/>
<dbReference type="KEGG" id="sde:Sde_1273"/>
<dbReference type="eggNOG" id="COG1312">
    <property type="taxonomic scope" value="Bacteria"/>
</dbReference>
<dbReference type="HOGENOM" id="CLU_058621_2_0_6"/>
<dbReference type="OrthoDB" id="9780250at2"/>
<dbReference type="UniPathway" id="UPA00246"/>
<dbReference type="Proteomes" id="UP000001947">
    <property type="component" value="Chromosome"/>
</dbReference>
<dbReference type="GO" id="GO:0008198">
    <property type="term" value="F:ferrous iron binding"/>
    <property type="evidence" value="ECO:0007669"/>
    <property type="project" value="TreeGrafter"/>
</dbReference>
<dbReference type="GO" id="GO:0030145">
    <property type="term" value="F:manganese ion binding"/>
    <property type="evidence" value="ECO:0007669"/>
    <property type="project" value="TreeGrafter"/>
</dbReference>
<dbReference type="GO" id="GO:0008927">
    <property type="term" value="F:mannonate dehydratase activity"/>
    <property type="evidence" value="ECO:0007669"/>
    <property type="project" value="UniProtKB-UniRule"/>
</dbReference>
<dbReference type="GO" id="GO:0042840">
    <property type="term" value="P:D-glucuronate catabolic process"/>
    <property type="evidence" value="ECO:0007669"/>
    <property type="project" value="TreeGrafter"/>
</dbReference>
<dbReference type="Gene3D" id="3.20.20.150">
    <property type="entry name" value="Divalent-metal-dependent TIM barrel enzymes"/>
    <property type="match status" value="1"/>
</dbReference>
<dbReference type="HAMAP" id="MF_00106">
    <property type="entry name" value="UxuA"/>
    <property type="match status" value="1"/>
</dbReference>
<dbReference type="InterPro" id="IPR004628">
    <property type="entry name" value="Man_deHydtase"/>
</dbReference>
<dbReference type="InterPro" id="IPR036237">
    <property type="entry name" value="Xyl_isomerase-like_sf"/>
</dbReference>
<dbReference type="NCBIfam" id="NF003027">
    <property type="entry name" value="PRK03906.1"/>
    <property type="match status" value="1"/>
</dbReference>
<dbReference type="NCBIfam" id="TIGR00695">
    <property type="entry name" value="uxuA"/>
    <property type="match status" value="1"/>
</dbReference>
<dbReference type="PANTHER" id="PTHR30387">
    <property type="entry name" value="MANNONATE DEHYDRATASE"/>
    <property type="match status" value="1"/>
</dbReference>
<dbReference type="PANTHER" id="PTHR30387:SF2">
    <property type="entry name" value="MANNONATE DEHYDRATASE"/>
    <property type="match status" value="1"/>
</dbReference>
<dbReference type="Pfam" id="PF03786">
    <property type="entry name" value="UxuA"/>
    <property type="match status" value="1"/>
</dbReference>
<dbReference type="PIRSF" id="PIRSF016049">
    <property type="entry name" value="Man_dehyd"/>
    <property type="match status" value="1"/>
</dbReference>
<dbReference type="SUPFAM" id="SSF51658">
    <property type="entry name" value="Xylose isomerase-like"/>
    <property type="match status" value="1"/>
</dbReference>
<organism>
    <name type="scientific">Saccharophagus degradans (strain 2-40 / ATCC 43961 / DSM 17024)</name>
    <dbReference type="NCBI Taxonomy" id="203122"/>
    <lineage>
        <taxon>Bacteria</taxon>
        <taxon>Pseudomonadati</taxon>
        <taxon>Pseudomonadota</taxon>
        <taxon>Gammaproteobacteria</taxon>
        <taxon>Cellvibrionales</taxon>
        <taxon>Cellvibrionaceae</taxon>
        <taxon>Saccharophagus</taxon>
    </lineage>
</organism>
<accession>Q21L94</accession>
<keyword id="KW-0408">Iron</keyword>
<keyword id="KW-0456">Lyase</keyword>
<keyword id="KW-0464">Manganese</keyword>
<keyword id="KW-1185">Reference proteome</keyword>
<proteinExistence type="inferred from homology"/>
<comment type="function">
    <text evidence="1">Catalyzes the dehydration of D-mannonate.</text>
</comment>
<comment type="catalytic activity">
    <reaction evidence="1">
        <text>D-mannonate = 2-dehydro-3-deoxy-D-gluconate + H2O</text>
        <dbReference type="Rhea" id="RHEA:20097"/>
        <dbReference type="ChEBI" id="CHEBI:15377"/>
        <dbReference type="ChEBI" id="CHEBI:17767"/>
        <dbReference type="ChEBI" id="CHEBI:57990"/>
        <dbReference type="EC" id="4.2.1.8"/>
    </reaction>
</comment>
<comment type="cofactor">
    <cofactor evidence="1">
        <name>Fe(2+)</name>
        <dbReference type="ChEBI" id="CHEBI:29033"/>
    </cofactor>
    <cofactor evidence="1">
        <name>Mn(2+)</name>
        <dbReference type="ChEBI" id="CHEBI:29035"/>
    </cofactor>
</comment>
<comment type="pathway">
    <text evidence="1">Carbohydrate metabolism; pentose and glucuronate interconversion.</text>
</comment>
<comment type="similarity">
    <text evidence="1">Belongs to the mannonate dehydratase family.</text>
</comment>
<sequence>MQETWRWFGPNDSISLQKIAQAGATGIVSSLHHVPTGALWQLEEIEAQKKIIEDAGLEWSVIESIPVHNDIKTRTGNFQEYIENYKQSVINAGKAGVKTICYNFMPVVDWTRTNLSYRLPNASQALRFEMTDFAAYDVYLLQRENAAADYSEEVLNRAKARFDAMDETEKDLLEKNIIAGLPGGEGSYTRDTIREAIQQFIDLGTEGFRNHMFEFLREIIPAAESVGVKMCIHPDDPPFSLFGLPRVVSTADDARKLLNAVPSPSNGLTLCAGSYGARGDNDLVGMAKEFGDRIYFVHLRNVKREPDGSFYEADHLDGDNDMVGLVNALLCEERRRHAAGETNCAIPMRPDHGHLMADELNLPDVKPGYSYTGRMKGLAELRGVIHALEVLQRQHAL</sequence>
<gene>
    <name evidence="1" type="primary">uxuA</name>
    <name type="ordered locus">Sde_1273</name>
</gene>
<feature type="chain" id="PRO_1000034336" description="Mannonate dehydratase">
    <location>
        <begin position="1"/>
        <end position="397"/>
    </location>
</feature>
<reference key="1">
    <citation type="journal article" date="2008" name="PLoS Genet.">
        <title>Complete genome sequence of the complex carbohydrate-degrading marine bacterium, Saccharophagus degradans strain 2-40 T.</title>
        <authorList>
            <person name="Weiner R.M."/>
            <person name="Taylor L.E. II"/>
            <person name="Henrissat B."/>
            <person name="Hauser L."/>
            <person name="Land M."/>
            <person name="Coutinho P.M."/>
            <person name="Rancurel C."/>
            <person name="Saunders E.H."/>
            <person name="Longmire A.G."/>
            <person name="Zhang H."/>
            <person name="Bayer E.A."/>
            <person name="Gilbert H.J."/>
            <person name="Larimer F."/>
            <person name="Zhulin I.B."/>
            <person name="Ekborg N.A."/>
            <person name="Lamed R."/>
            <person name="Richardson P.M."/>
            <person name="Borovok I."/>
            <person name="Hutcheson S."/>
        </authorList>
    </citation>
    <scope>NUCLEOTIDE SEQUENCE [LARGE SCALE GENOMIC DNA]</scope>
    <source>
        <strain>2-40 / ATCC 43961 / DSM 17024</strain>
    </source>
</reference>
<evidence type="ECO:0000255" key="1">
    <source>
        <dbReference type="HAMAP-Rule" id="MF_00106"/>
    </source>
</evidence>
<protein>
    <recommendedName>
        <fullName evidence="1">Mannonate dehydratase</fullName>
        <ecNumber evidence="1">4.2.1.8</ecNumber>
    </recommendedName>
    <alternativeName>
        <fullName evidence="1">D-mannonate hydro-lyase</fullName>
    </alternativeName>
</protein>